<gene>
    <name type="primary">narT</name>
    <name type="synonym">narK</name>
    <name type="ordered locus">SAB2267c</name>
</gene>
<name>NART_STAAB</name>
<sequence>MYKTKGGFQLTLQTLSLVVGFMAWSIIAPLMPFIKQDVNVTEGQISIILAIPVILGSVLRVPFGYLTNIVGAKWVFFTSFIVLLFPIFFLSQAQTPGMLMASGFFLGVGGAIFSVGVTSVPKYFPKEKVGLANGIYGMGNIGTAVSSFLAPPIAGIIGWQTTVRSYLIIIALFALIMFIFGDTQERKIKVPLMAQMKTLSKNYKLYYLSYWYFITFGAFVAFGIFLPNYLVNHFGIDKVDAGIRSGVFIALATFLRPIGGILGDKFNAVKVLMIDFVVMIIGAIILGISDHIALFTVGCLTISICAGIGNGLIFKLVPSYFSNEAGSANGIVSMMGGLGGFFPPLVITYVANLTGSSHLAFIFLAVFGCIALFTMRHLYQKEYGSLKNG</sequence>
<feature type="chain" id="PRO_0000349386" description="Probable nitrate transporter NarT">
    <location>
        <begin position="1"/>
        <end position="389"/>
    </location>
</feature>
<feature type="transmembrane region" description="Helical" evidence="2">
    <location>
        <begin position="14"/>
        <end position="34"/>
    </location>
</feature>
<feature type="transmembrane region" description="Helical" evidence="2">
    <location>
        <begin position="45"/>
        <end position="65"/>
    </location>
</feature>
<feature type="transmembrane region" description="Helical" evidence="2">
    <location>
        <begin position="69"/>
        <end position="89"/>
    </location>
</feature>
<feature type="transmembrane region" description="Helical" evidence="2">
    <location>
        <begin position="97"/>
        <end position="117"/>
    </location>
</feature>
<feature type="transmembrane region" description="Helical" evidence="2">
    <location>
        <begin position="139"/>
        <end position="159"/>
    </location>
</feature>
<feature type="transmembrane region" description="Helical" evidence="2">
    <location>
        <begin position="161"/>
        <end position="181"/>
    </location>
</feature>
<feature type="transmembrane region" description="Helical" evidence="2">
    <location>
        <begin position="211"/>
        <end position="231"/>
    </location>
</feature>
<feature type="transmembrane region" description="Helical" evidence="2">
    <location>
        <begin position="246"/>
        <end position="266"/>
    </location>
</feature>
<feature type="transmembrane region" description="Helical" evidence="2">
    <location>
        <begin position="268"/>
        <end position="288"/>
    </location>
</feature>
<feature type="transmembrane region" description="Helical" evidence="2">
    <location>
        <begin position="294"/>
        <end position="314"/>
    </location>
</feature>
<feature type="transmembrane region" description="Helical" evidence="2">
    <location>
        <begin position="331"/>
        <end position="351"/>
    </location>
</feature>
<feature type="transmembrane region" description="Helical" evidence="2">
    <location>
        <begin position="353"/>
        <end position="373"/>
    </location>
</feature>
<evidence type="ECO:0000250" key="1"/>
<evidence type="ECO:0000255" key="2"/>
<evidence type="ECO:0000305" key="3"/>
<proteinExistence type="inferred from homology"/>
<protein>
    <recommendedName>
        <fullName>Probable nitrate transporter NarT</fullName>
    </recommendedName>
</protein>
<reference key="1">
    <citation type="journal article" date="2007" name="PLoS ONE">
        <title>Molecular correlates of host specialization in Staphylococcus aureus.</title>
        <authorList>
            <person name="Herron-Olson L."/>
            <person name="Fitzgerald J.R."/>
            <person name="Musser J.M."/>
            <person name="Kapur V."/>
        </authorList>
    </citation>
    <scope>NUCLEOTIDE SEQUENCE [LARGE SCALE GENOMIC DNA]</scope>
    <source>
        <strain>bovine RF122 / ET3-1</strain>
    </source>
</reference>
<comment type="function">
    <text evidence="1">Probably required for nitrate uptake under anoxic conditions. Also possibly involved in excretion of nitrite produced by the dissimilatory reduction of nitrate (By similarity).</text>
</comment>
<comment type="subcellular location">
    <subcellularLocation>
        <location evidence="3">Cell membrane</location>
        <topology evidence="3">Multi-pass membrane protein</topology>
    </subcellularLocation>
</comment>
<comment type="induction">
    <text evidence="1">Positively regulated by the two-component system NreB/NreC.</text>
</comment>
<comment type="similarity">
    <text evidence="3">Belongs to the major facilitator superfamily. Nitrate/nitrite porter (TC 2.A.1.8) family.</text>
</comment>
<dbReference type="EMBL" id="AJ938182">
    <property type="protein sequence ID" value="CAI81956.1"/>
    <property type="molecule type" value="Genomic_DNA"/>
</dbReference>
<dbReference type="RefSeq" id="WP_000278559.1">
    <property type="nucleotide sequence ID" value="NC_007622.1"/>
</dbReference>
<dbReference type="SMR" id="Q2YZ45"/>
<dbReference type="KEGG" id="sab:SAB2267c"/>
<dbReference type="HOGENOM" id="CLU_001265_14_0_9"/>
<dbReference type="GO" id="GO:0005886">
    <property type="term" value="C:plasma membrane"/>
    <property type="evidence" value="ECO:0007669"/>
    <property type="project" value="UniProtKB-SubCell"/>
</dbReference>
<dbReference type="GO" id="GO:0015112">
    <property type="term" value="F:nitrate transmembrane transporter activity"/>
    <property type="evidence" value="ECO:0007669"/>
    <property type="project" value="InterPro"/>
</dbReference>
<dbReference type="GO" id="GO:0042128">
    <property type="term" value="P:nitrate assimilation"/>
    <property type="evidence" value="ECO:0007669"/>
    <property type="project" value="UniProtKB-KW"/>
</dbReference>
<dbReference type="CDD" id="cd17341">
    <property type="entry name" value="MFS_NRT2_like"/>
    <property type="match status" value="1"/>
</dbReference>
<dbReference type="Gene3D" id="1.20.1250.20">
    <property type="entry name" value="MFS general substrate transporter like domains"/>
    <property type="match status" value="2"/>
</dbReference>
<dbReference type="InterPro" id="IPR011701">
    <property type="entry name" value="MFS"/>
</dbReference>
<dbReference type="InterPro" id="IPR020846">
    <property type="entry name" value="MFS_dom"/>
</dbReference>
<dbReference type="InterPro" id="IPR036259">
    <property type="entry name" value="MFS_trans_sf"/>
</dbReference>
<dbReference type="InterPro" id="IPR044772">
    <property type="entry name" value="NO3_transporter"/>
</dbReference>
<dbReference type="PANTHER" id="PTHR23515">
    <property type="entry name" value="HIGH-AFFINITY NITRATE TRANSPORTER 2.3"/>
    <property type="match status" value="1"/>
</dbReference>
<dbReference type="Pfam" id="PF07690">
    <property type="entry name" value="MFS_1"/>
    <property type="match status" value="1"/>
</dbReference>
<dbReference type="SUPFAM" id="SSF103473">
    <property type="entry name" value="MFS general substrate transporter"/>
    <property type="match status" value="1"/>
</dbReference>
<dbReference type="PROSITE" id="PS50850">
    <property type="entry name" value="MFS"/>
    <property type="match status" value="1"/>
</dbReference>
<accession>Q2YZ45</accession>
<organism>
    <name type="scientific">Staphylococcus aureus (strain bovine RF122 / ET3-1)</name>
    <dbReference type="NCBI Taxonomy" id="273036"/>
    <lineage>
        <taxon>Bacteria</taxon>
        <taxon>Bacillati</taxon>
        <taxon>Bacillota</taxon>
        <taxon>Bacilli</taxon>
        <taxon>Bacillales</taxon>
        <taxon>Staphylococcaceae</taxon>
        <taxon>Staphylococcus</taxon>
    </lineage>
</organism>
<keyword id="KW-1003">Cell membrane</keyword>
<keyword id="KW-0472">Membrane</keyword>
<keyword id="KW-0534">Nitrate assimilation</keyword>
<keyword id="KW-0812">Transmembrane</keyword>
<keyword id="KW-1133">Transmembrane helix</keyword>
<keyword id="KW-0813">Transport</keyword>